<accession>Q11JJ6</accession>
<name>NUOK_CHESB</name>
<gene>
    <name evidence="1" type="primary">nuoK</name>
    <name type="ordered locus">Meso_1032</name>
</gene>
<proteinExistence type="inferred from homology"/>
<keyword id="KW-0997">Cell inner membrane</keyword>
<keyword id="KW-1003">Cell membrane</keyword>
<keyword id="KW-0472">Membrane</keyword>
<keyword id="KW-0520">NAD</keyword>
<keyword id="KW-0874">Quinone</keyword>
<keyword id="KW-1278">Translocase</keyword>
<keyword id="KW-0812">Transmembrane</keyword>
<keyword id="KW-1133">Transmembrane helix</keyword>
<keyword id="KW-0813">Transport</keyword>
<keyword id="KW-0830">Ubiquinone</keyword>
<protein>
    <recommendedName>
        <fullName evidence="1">NADH-quinone oxidoreductase subunit K</fullName>
        <ecNumber evidence="1">7.1.1.-</ecNumber>
    </recommendedName>
    <alternativeName>
        <fullName evidence="1">NADH dehydrogenase I subunit K</fullName>
    </alternativeName>
    <alternativeName>
        <fullName evidence="1">NDH-1 subunit K</fullName>
    </alternativeName>
</protein>
<comment type="function">
    <text evidence="1">NDH-1 shuttles electrons from NADH, via FMN and iron-sulfur (Fe-S) centers, to quinones in the respiratory chain. The immediate electron acceptor for the enzyme in this species is believed to be ubiquinone. Couples the redox reaction to proton translocation (for every two electrons transferred, four hydrogen ions are translocated across the cytoplasmic membrane), and thus conserves the redox energy in a proton gradient.</text>
</comment>
<comment type="catalytic activity">
    <reaction evidence="1">
        <text>a quinone + NADH + 5 H(+)(in) = a quinol + NAD(+) + 4 H(+)(out)</text>
        <dbReference type="Rhea" id="RHEA:57888"/>
        <dbReference type="ChEBI" id="CHEBI:15378"/>
        <dbReference type="ChEBI" id="CHEBI:24646"/>
        <dbReference type="ChEBI" id="CHEBI:57540"/>
        <dbReference type="ChEBI" id="CHEBI:57945"/>
        <dbReference type="ChEBI" id="CHEBI:132124"/>
    </reaction>
</comment>
<comment type="subunit">
    <text evidence="1">NDH-1 is composed of 14 different subunits. Subunits NuoA, H, J, K, L, M, N constitute the membrane sector of the complex.</text>
</comment>
<comment type="subcellular location">
    <subcellularLocation>
        <location evidence="1">Cell inner membrane</location>
        <topology evidence="1">Multi-pass membrane protein</topology>
    </subcellularLocation>
</comment>
<comment type="similarity">
    <text evidence="1">Belongs to the complex I subunit 4L family.</text>
</comment>
<dbReference type="EC" id="7.1.1.-" evidence="1"/>
<dbReference type="EMBL" id="CP000390">
    <property type="protein sequence ID" value="ABG62429.1"/>
    <property type="molecule type" value="Genomic_DNA"/>
</dbReference>
<dbReference type="SMR" id="Q11JJ6"/>
<dbReference type="STRING" id="266779.Meso_1032"/>
<dbReference type="KEGG" id="mes:Meso_1032"/>
<dbReference type="eggNOG" id="COG0713">
    <property type="taxonomic scope" value="Bacteria"/>
</dbReference>
<dbReference type="HOGENOM" id="CLU_144724_2_0_5"/>
<dbReference type="OrthoDB" id="9811124at2"/>
<dbReference type="GO" id="GO:0030964">
    <property type="term" value="C:NADH dehydrogenase complex"/>
    <property type="evidence" value="ECO:0007669"/>
    <property type="project" value="TreeGrafter"/>
</dbReference>
<dbReference type="GO" id="GO:0005886">
    <property type="term" value="C:plasma membrane"/>
    <property type="evidence" value="ECO:0007669"/>
    <property type="project" value="UniProtKB-SubCell"/>
</dbReference>
<dbReference type="GO" id="GO:0050136">
    <property type="term" value="F:NADH:ubiquinone reductase (non-electrogenic) activity"/>
    <property type="evidence" value="ECO:0007669"/>
    <property type="project" value="UniProtKB-UniRule"/>
</dbReference>
<dbReference type="GO" id="GO:0048038">
    <property type="term" value="F:quinone binding"/>
    <property type="evidence" value="ECO:0007669"/>
    <property type="project" value="UniProtKB-KW"/>
</dbReference>
<dbReference type="GO" id="GO:0042773">
    <property type="term" value="P:ATP synthesis coupled electron transport"/>
    <property type="evidence" value="ECO:0007669"/>
    <property type="project" value="InterPro"/>
</dbReference>
<dbReference type="FunFam" id="1.10.287.3510:FF:000001">
    <property type="entry name" value="NADH-quinone oxidoreductase subunit K"/>
    <property type="match status" value="1"/>
</dbReference>
<dbReference type="Gene3D" id="1.10.287.3510">
    <property type="match status" value="1"/>
</dbReference>
<dbReference type="HAMAP" id="MF_01456">
    <property type="entry name" value="NDH1_NuoK"/>
    <property type="match status" value="1"/>
</dbReference>
<dbReference type="InterPro" id="IPR001133">
    <property type="entry name" value="NADH_UbQ_OxRdtase_chain4L/K"/>
</dbReference>
<dbReference type="InterPro" id="IPR039428">
    <property type="entry name" value="NUOK/Mnh_C1-like"/>
</dbReference>
<dbReference type="NCBIfam" id="NF004320">
    <property type="entry name" value="PRK05715.1-2"/>
    <property type="match status" value="1"/>
</dbReference>
<dbReference type="NCBIfam" id="NF004321">
    <property type="entry name" value="PRK05715.1-3"/>
    <property type="match status" value="1"/>
</dbReference>
<dbReference type="NCBIfam" id="NF004323">
    <property type="entry name" value="PRK05715.1-5"/>
    <property type="match status" value="1"/>
</dbReference>
<dbReference type="PANTHER" id="PTHR11434:SF21">
    <property type="entry name" value="NADH DEHYDROGENASE SUBUNIT 4L-RELATED"/>
    <property type="match status" value="1"/>
</dbReference>
<dbReference type="PANTHER" id="PTHR11434">
    <property type="entry name" value="NADH-UBIQUINONE OXIDOREDUCTASE SUBUNIT ND4L"/>
    <property type="match status" value="1"/>
</dbReference>
<dbReference type="Pfam" id="PF00420">
    <property type="entry name" value="Oxidored_q2"/>
    <property type="match status" value="1"/>
</dbReference>
<sequence>MEVGIAHYLTVSAVLFTLGIFGIFLNRKNVIIILMSIELILLAVNLNFIAFSAVLGDLVGQVFALFVLTVAAAEAAIGLAILVVFFRNRGSIAVEDINMMKG</sequence>
<reference key="1">
    <citation type="submission" date="2006-06" db="EMBL/GenBank/DDBJ databases">
        <title>Complete sequence of chromosome of Mesorhizobium sp. BNC1.</title>
        <authorList>
            <consortium name="US DOE Joint Genome Institute"/>
            <person name="Copeland A."/>
            <person name="Lucas S."/>
            <person name="Lapidus A."/>
            <person name="Barry K."/>
            <person name="Detter J.C."/>
            <person name="Glavina del Rio T."/>
            <person name="Hammon N."/>
            <person name="Israni S."/>
            <person name="Dalin E."/>
            <person name="Tice H."/>
            <person name="Pitluck S."/>
            <person name="Chertkov O."/>
            <person name="Brettin T."/>
            <person name="Bruce D."/>
            <person name="Han C."/>
            <person name="Tapia R."/>
            <person name="Gilna P."/>
            <person name="Schmutz J."/>
            <person name="Larimer F."/>
            <person name="Land M."/>
            <person name="Hauser L."/>
            <person name="Kyrpides N."/>
            <person name="Mikhailova N."/>
            <person name="Richardson P."/>
        </authorList>
    </citation>
    <scope>NUCLEOTIDE SEQUENCE [LARGE SCALE GENOMIC DNA]</scope>
    <source>
        <strain>BNC1</strain>
    </source>
</reference>
<feature type="chain" id="PRO_0000390115" description="NADH-quinone oxidoreductase subunit K">
    <location>
        <begin position="1"/>
        <end position="102"/>
    </location>
</feature>
<feature type="transmembrane region" description="Helical" evidence="1">
    <location>
        <begin position="5"/>
        <end position="25"/>
    </location>
</feature>
<feature type="transmembrane region" description="Helical" evidence="1">
    <location>
        <begin position="31"/>
        <end position="51"/>
    </location>
</feature>
<feature type="transmembrane region" description="Helical" evidence="1">
    <location>
        <begin position="66"/>
        <end position="86"/>
    </location>
</feature>
<evidence type="ECO:0000255" key="1">
    <source>
        <dbReference type="HAMAP-Rule" id="MF_01456"/>
    </source>
</evidence>
<organism>
    <name type="scientific">Chelativorans sp. (strain BNC1)</name>
    <dbReference type="NCBI Taxonomy" id="266779"/>
    <lineage>
        <taxon>Bacteria</taxon>
        <taxon>Pseudomonadati</taxon>
        <taxon>Pseudomonadota</taxon>
        <taxon>Alphaproteobacteria</taxon>
        <taxon>Hyphomicrobiales</taxon>
        <taxon>Phyllobacteriaceae</taxon>
        <taxon>Chelativorans</taxon>
    </lineage>
</organism>